<reference key="1">
    <citation type="journal article" date="1995" name="Biochem. J.">
        <title>The napEDABC gene cluster encoding the periplasmic nitrate reductase system of Thiosphaera pantotropha.</title>
        <authorList>
            <person name="Berks B.C."/>
            <person name="Richardson D.J."/>
            <person name="Reilly A."/>
            <person name="Willis A.C."/>
            <person name="Ferguson S.J."/>
        </authorList>
    </citation>
    <scope>NUCLEOTIDE SEQUENCE [GENOMIC DNA]</scope>
    <source>
        <strain>ATCC 35512 / DSM 2944 / CIP 106514 / LMD 82.5 / NBRC 102493 / NCCB 82005 / GB17</strain>
    </source>
</reference>
<accession>Q56352</accession>
<evidence type="ECO:0000250" key="1">
    <source>
        <dbReference type="UniProtKB" id="Q72EF4"/>
    </source>
</evidence>
<evidence type="ECO:0000255" key="2"/>
<evidence type="ECO:0000305" key="3"/>
<gene>
    <name type="primary">napC</name>
</gene>
<protein>
    <recommendedName>
        <fullName>Cytochrome c-type protein NapC</fullName>
    </recommendedName>
</protein>
<sequence length="237" mass="27236">MGWIRASIRWIWGRVTWFWRVISRPSSFLSIGFLTLGGFICGVIFWGGFNTALEITNTEKFCTSCHEMRDNVYQELMPTVHFSNRSGVRASCPDCHVPHEWTDKIARKMQASKEVWGKIFGTISTREKFLEKRLELAKHEWARLKANDSLECRNCHAAVAMDFTKQTRRAPQIHERYLISGEKTCIDCHKGIAHQLPDMTGIEPGWLEPPELRGEEQAWLGGGAEAVHRYLATVETR</sequence>
<comment type="function">
    <text>Mediates electron flow from quinones to the NapAB complex.</text>
</comment>
<comment type="subcellular location">
    <subcellularLocation>
        <location>Cell inner membrane</location>
        <topology>Single-pass membrane protein</topology>
    </subcellularLocation>
</comment>
<comment type="PTM">
    <text evidence="3">Binds 4 heme groups per subunit.</text>
</comment>
<comment type="similarity">
    <text evidence="3">Belongs to the NapC/NirT/NrfH family.</text>
</comment>
<feature type="chain" id="PRO_0000108436" description="Cytochrome c-type protein NapC">
    <location>
        <begin position="1"/>
        <end position="237"/>
    </location>
</feature>
<feature type="topological domain" description="Cytoplasmic" evidence="2">
    <location>
        <begin position="1"/>
        <end position="28"/>
    </location>
</feature>
<feature type="transmembrane region" description="Helical" evidence="2">
    <location>
        <begin position="29"/>
        <end position="49"/>
    </location>
</feature>
<feature type="topological domain" description="Periplasmic" evidence="2">
    <location>
        <begin position="50"/>
        <end position="237"/>
    </location>
</feature>
<feature type="binding site" description="covalent" evidence="1">
    <location>
        <position position="62"/>
    </location>
    <ligand>
        <name>heme</name>
        <dbReference type="ChEBI" id="CHEBI:30413"/>
        <label>1</label>
    </ligand>
</feature>
<feature type="binding site" description="covalent" evidence="1">
    <location>
        <position position="65"/>
    </location>
    <ligand>
        <name>heme</name>
        <dbReference type="ChEBI" id="CHEBI:30413"/>
        <label>1</label>
    </ligand>
</feature>
<feature type="binding site" description="axial binding residue" evidence="1">
    <location>
        <position position="68"/>
    </location>
    <ligand>
        <name>heme</name>
        <dbReference type="ChEBI" id="CHEBI:30413"/>
        <label>1</label>
    </ligand>
    <ligandPart>
        <name>Fe</name>
        <dbReference type="ChEBI" id="CHEBI:18248"/>
    </ligandPart>
</feature>
<feature type="binding site" description="covalent" evidence="1">
    <location>
        <position position="92"/>
    </location>
    <ligand>
        <name>heme</name>
        <dbReference type="ChEBI" id="CHEBI:30413"/>
        <label>2</label>
    </ligand>
</feature>
<feature type="binding site" description="covalent" evidence="1">
    <location>
        <position position="95"/>
    </location>
    <ligand>
        <name>heme</name>
        <dbReference type="ChEBI" id="CHEBI:30413"/>
        <label>2</label>
    </ligand>
</feature>
<feature type="binding site" description="axial binding residue" evidence="1">
    <location>
        <position position="96"/>
    </location>
    <ligand>
        <name>heme</name>
        <dbReference type="ChEBI" id="CHEBI:30413"/>
        <label>2</label>
    </ligand>
    <ligandPart>
        <name>Fe</name>
        <dbReference type="ChEBI" id="CHEBI:18248"/>
    </ligandPart>
</feature>
<feature type="binding site" evidence="1">
    <location>
        <position position="108"/>
    </location>
    <ligand>
        <name>substrate</name>
    </ligand>
</feature>
<feature type="binding site" description="axial binding residue" evidence="1">
    <location>
        <position position="114"/>
    </location>
    <ligand>
        <name>heme</name>
        <dbReference type="ChEBI" id="CHEBI:30413"/>
        <label>1</label>
    </ligand>
    <ligandPart>
        <name>Fe</name>
        <dbReference type="ChEBI" id="CHEBI:18248"/>
    </ligandPart>
</feature>
<feature type="binding site" description="covalent" evidence="1">
    <location>
        <position position="152"/>
    </location>
    <ligand>
        <name>heme</name>
        <dbReference type="ChEBI" id="CHEBI:30413"/>
        <label>3</label>
    </ligand>
</feature>
<feature type="binding site" description="covalent" evidence="1">
    <location>
        <position position="155"/>
    </location>
    <ligand>
        <name>heme</name>
        <dbReference type="ChEBI" id="CHEBI:30413"/>
        <label>3</label>
    </ligand>
</feature>
<feature type="binding site" description="axial binding residue" evidence="1">
    <location>
        <position position="156"/>
    </location>
    <ligand>
        <name>heme</name>
        <dbReference type="ChEBI" id="CHEBI:30413"/>
        <label>3</label>
    </ligand>
    <ligandPart>
        <name>Fe</name>
        <dbReference type="ChEBI" id="CHEBI:18248"/>
    </ligandPart>
</feature>
<feature type="binding site" description="covalent" evidence="1">
    <location>
        <position position="185"/>
    </location>
    <ligand>
        <name>heme</name>
        <dbReference type="ChEBI" id="CHEBI:30413"/>
        <label>4</label>
    </ligand>
</feature>
<feature type="binding site" description="covalent" evidence="1">
    <location>
        <position position="188"/>
    </location>
    <ligand>
        <name>heme</name>
        <dbReference type="ChEBI" id="CHEBI:30413"/>
        <label>4</label>
    </ligand>
</feature>
<feature type="binding site" description="axial binding residue" evidence="1">
    <location>
        <position position="189"/>
    </location>
    <ligand>
        <name>heme</name>
        <dbReference type="ChEBI" id="CHEBI:30413"/>
        <label>4</label>
    </ligand>
    <ligandPart>
        <name>Fe</name>
        <dbReference type="ChEBI" id="CHEBI:18248"/>
    </ligandPart>
</feature>
<feature type="binding site" description="axial binding residue" evidence="1">
    <location>
        <position position="194"/>
    </location>
    <ligand>
        <name>heme</name>
        <dbReference type="ChEBI" id="CHEBI:30413"/>
        <label>2</label>
    </ligand>
    <ligandPart>
        <name>Fe</name>
        <dbReference type="ChEBI" id="CHEBI:18248"/>
    </ligandPart>
</feature>
<keyword id="KW-0997">Cell inner membrane</keyword>
<keyword id="KW-1003">Cell membrane</keyword>
<keyword id="KW-0249">Electron transport</keyword>
<keyword id="KW-0349">Heme</keyword>
<keyword id="KW-0408">Iron</keyword>
<keyword id="KW-0472">Membrane</keyword>
<keyword id="KW-0479">Metal-binding</keyword>
<keyword id="KW-0812">Transmembrane</keyword>
<keyword id="KW-1133">Transmembrane helix</keyword>
<keyword id="KW-0813">Transport</keyword>
<dbReference type="EMBL" id="Z36773">
    <property type="protein sequence ID" value="CAA85348.1"/>
    <property type="molecule type" value="Genomic_DNA"/>
</dbReference>
<dbReference type="PIR" id="S56137">
    <property type="entry name" value="S56137"/>
</dbReference>
<dbReference type="STRING" id="82367.SAMN04244567_03484"/>
<dbReference type="eggNOG" id="COG3005">
    <property type="taxonomic scope" value="Bacteria"/>
</dbReference>
<dbReference type="GO" id="GO:0005886">
    <property type="term" value="C:plasma membrane"/>
    <property type="evidence" value="ECO:0007669"/>
    <property type="project" value="UniProtKB-SubCell"/>
</dbReference>
<dbReference type="GO" id="GO:0009055">
    <property type="term" value="F:electron transfer activity"/>
    <property type="evidence" value="ECO:0007669"/>
    <property type="project" value="TreeGrafter"/>
</dbReference>
<dbReference type="GO" id="GO:0020037">
    <property type="term" value="F:heme binding"/>
    <property type="evidence" value="ECO:0007669"/>
    <property type="project" value="InterPro"/>
</dbReference>
<dbReference type="GO" id="GO:0046872">
    <property type="term" value="F:metal ion binding"/>
    <property type="evidence" value="ECO:0007669"/>
    <property type="project" value="UniProtKB-KW"/>
</dbReference>
<dbReference type="GO" id="GO:0009061">
    <property type="term" value="P:anaerobic respiration"/>
    <property type="evidence" value="ECO:0007669"/>
    <property type="project" value="TreeGrafter"/>
</dbReference>
<dbReference type="GO" id="GO:0019333">
    <property type="term" value="P:denitrification pathway"/>
    <property type="evidence" value="ECO:0007669"/>
    <property type="project" value="InterPro"/>
</dbReference>
<dbReference type="FunFam" id="1.10.3820.10:FF:000001">
    <property type="entry name" value="Cytochrome c-type protein"/>
    <property type="match status" value="1"/>
</dbReference>
<dbReference type="Gene3D" id="1.10.3820.10">
    <property type="entry name" value="Di-heme elbow motif domain"/>
    <property type="match status" value="1"/>
</dbReference>
<dbReference type="InterPro" id="IPR051174">
    <property type="entry name" value="Cytochrome_c-type_ET"/>
</dbReference>
<dbReference type="InterPro" id="IPR036280">
    <property type="entry name" value="Multihaem_cyt_sf"/>
</dbReference>
<dbReference type="InterPro" id="IPR024717">
    <property type="entry name" value="NapC/NirT/NrfH"/>
</dbReference>
<dbReference type="InterPro" id="IPR005126">
    <property type="entry name" value="NapC/NirT_cyt_c_N"/>
</dbReference>
<dbReference type="InterPro" id="IPR038266">
    <property type="entry name" value="NapC/NirT_cytc_sf"/>
</dbReference>
<dbReference type="InterPro" id="IPR011885">
    <property type="entry name" value="NO3Rdtase_cyt_c_NapC/NirT"/>
</dbReference>
<dbReference type="NCBIfam" id="TIGR02161">
    <property type="entry name" value="napC_nirT"/>
    <property type="match status" value="1"/>
</dbReference>
<dbReference type="PANTHER" id="PTHR30333">
    <property type="entry name" value="CYTOCHROME C-TYPE PROTEIN"/>
    <property type="match status" value="1"/>
</dbReference>
<dbReference type="PANTHER" id="PTHR30333:SF1">
    <property type="entry name" value="CYTOCHROME C-TYPE PROTEIN NAPC"/>
    <property type="match status" value="1"/>
</dbReference>
<dbReference type="Pfam" id="PF03264">
    <property type="entry name" value="Cytochrom_NNT"/>
    <property type="match status" value="1"/>
</dbReference>
<dbReference type="PIRSF" id="PIRSF000013">
    <property type="entry name" value="4_hem_cytochrm_NapC"/>
    <property type="match status" value="1"/>
</dbReference>
<dbReference type="SUPFAM" id="SSF48695">
    <property type="entry name" value="Multiheme cytochromes"/>
    <property type="match status" value="1"/>
</dbReference>
<dbReference type="PROSITE" id="PS51008">
    <property type="entry name" value="MULTIHEME_CYTC"/>
    <property type="match status" value="1"/>
</dbReference>
<proteinExistence type="inferred from homology"/>
<organism>
    <name type="scientific">Paracoccus pantotrophus</name>
    <name type="common">Thiosphaera pantotropha</name>
    <dbReference type="NCBI Taxonomy" id="82367"/>
    <lineage>
        <taxon>Bacteria</taxon>
        <taxon>Pseudomonadati</taxon>
        <taxon>Pseudomonadota</taxon>
        <taxon>Alphaproteobacteria</taxon>
        <taxon>Rhodobacterales</taxon>
        <taxon>Paracoccaceae</taxon>
        <taxon>Paracoccus</taxon>
    </lineage>
</organism>
<name>NAPC_PARPN</name>